<proteinExistence type="evidence at transcript level"/>
<reference key="1">
    <citation type="journal article" date="1995" name="Plant Physiol.">
        <title>Nucleotide sequence of a cDNA clone encoding caffeoyl-coenzyme A 3-O-methyltransferase of Stellaria longipes (Caryophyllaceae).</title>
        <authorList>
            <person name="Zhang X.-H."/>
            <person name="Dickson E.E."/>
            <person name="Chinnappa C.C."/>
        </authorList>
    </citation>
    <scope>NUCLEOTIDE SEQUENCE [MRNA]</scope>
    <source>
        <tissue>Leaf</tissue>
        <tissue>Stem</tissue>
    </source>
</reference>
<reference key="2">
    <citation type="journal article" date="1997" name="J. Biosci.">
        <title>Molecular characterization of a cDNA encoding caffeoyl-coenzyme A 3-O-methyltransferase of Stellaria longipes.</title>
        <authorList>
            <person name="Zhang X.-H."/>
            <person name="Chinnappa C.C."/>
        </authorList>
    </citation>
    <scope>NUCLEOTIDE SEQUENCE [MRNA]</scope>
    <source>
        <tissue>Leaf</tissue>
        <tissue>Stem</tissue>
    </source>
</reference>
<comment type="function">
    <text>Methylates caffeoyl-CoA to feruloyl-CoA and 5-hydroxyferuloyl-CoA to sinapoyl-CoA. Plays a role in the synthesis of feruloylated polysaccharides. Involved in the reinforcement of the plant cell wall. Also involved in the responding to wounding or pathogen challenge by the increased formation of cell wall-bound ferulic acid polymers.</text>
</comment>
<comment type="catalytic activity">
    <reaction>
        <text>(E)-caffeoyl-CoA + S-adenosyl-L-methionine = (E)-feruloyl-CoA + S-adenosyl-L-homocysteine + H(+)</text>
        <dbReference type="Rhea" id="RHEA:16925"/>
        <dbReference type="ChEBI" id="CHEBI:15378"/>
        <dbReference type="ChEBI" id="CHEBI:57856"/>
        <dbReference type="ChEBI" id="CHEBI:59789"/>
        <dbReference type="ChEBI" id="CHEBI:87136"/>
        <dbReference type="ChEBI" id="CHEBI:87305"/>
        <dbReference type="EC" id="2.1.1.104"/>
    </reaction>
</comment>
<comment type="cofactor">
    <cofactor evidence="2">
        <name>a divalent metal cation</name>
        <dbReference type="ChEBI" id="CHEBI:60240"/>
    </cofactor>
    <text evidence="2">Binds 1 divalent metal cation per subunit.</text>
</comment>
<comment type="pathway">
    <text>Aromatic compound metabolism; phenylpropanoid biosynthesis.</text>
</comment>
<comment type="similarity">
    <text evidence="3">Belongs to the class I-like SAM-binding methyltransferase superfamily. Cation-dependent O-methyltransferase family. CCoAMT subfamily.</text>
</comment>
<name>CAMT_STELP</name>
<feature type="chain" id="PRO_0000165696" description="Caffeoyl-CoA O-methyltransferase">
    <location>
        <begin position="1"/>
        <end position="241"/>
    </location>
</feature>
<feature type="binding site" evidence="1">
    <location>
        <position position="14"/>
    </location>
    <ligand>
        <name>substrate</name>
    </ligand>
</feature>
<feature type="binding site" evidence="3">
    <location>
        <position position="58"/>
    </location>
    <ligand>
        <name>S-adenosyl-L-methionine</name>
        <dbReference type="ChEBI" id="CHEBI:59789"/>
    </ligand>
</feature>
<feature type="binding site" evidence="3">
    <location>
        <position position="80"/>
    </location>
    <ligand>
        <name>S-adenosyl-L-methionine</name>
        <dbReference type="ChEBI" id="CHEBI:59789"/>
    </ligand>
</feature>
<feature type="binding site" evidence="3">
    <location>
        <begin position="82"/>
        <end position="83"/>
    </location>
    <ligand>
        <name>S-adenosyl-L-methionine</name>
        <dbReference type="ChEBI" id="CHEBI:59789"/>
    </ligand>
</feature>
<feature type="binding site" evidence="3">
    <location>
        <position position="88"/>
    </location>
    <ligand>
        <name>S-adenosyl-L-methionine</name>
        <dbReference type="ChEBI" id="CHEBI:59789"/>
    </ligand>
</feature>
<feature type="binding site" evidence="3">
    <location>
        <position position="106"/>
    </location>
    <ligand>
        <name>S-adenosyl-L-methionine</name>
        <dbReference type="ChEBI" id="CHEBI:59789"/>
    </ligand>
</feature>
<feature type="binding site" evidence="3">
    <location>
        <position position="135"/>
    </location>
    <ligand>
        <name>S-adenosyl-L-methionine</name>
        <dbReference type="ChEBI" id="CHEBI:59789"/>
    </ligand>
</feature>
<feature type="binding site" evidence="3">
    <location>
        <position position="158"/>
    </location>
    <ligand>
        <name>a divalent metal cation</name>
        <dbReference type="ChEBI" id="CHEBI:60240"/>
    </ligand>
</feature>
<feature type="binding site" evidence="2">
    <location>
        <position position="158"/>
    </location>
    <ligand>
        <name>substrate</name>
    </ligand>
</feature>
<feature type="binding site" evidence="3">
    <location>
        <position position="160"/>
    </location>
    <ligand>
        <name>S-adenosyl-L-methionine</name>
        <dbReference type="ChEBI" id="CHEBI:59789"/>
    </ligand>
</feature>
<feature type="binding site" evidence="3">
    <location>
        <position position="184"/>
    </location>
    <ligand>
        <name>a divalent metal cation</name>
        <dbReference type="ChEBI" id="CHEBI:60240"/>
    </ligand>
</feature>
<feature type="binding site" evidence="3">
    <location>
        <position position="185"/>
    </location>
    <ligand>
        <name>a divalent metal cation</name>
        <dbReference type="ChEBI" id="CHEBI:60240"/>
    </ligand>
</feature>
<sequence>MLTKTMGNFFTEVKDTGLLQSEQLHQYILDTSVFPRESEHLKELRKATESHPMSFMGTSPLAGQLLSFMLKTVKPKKTIEVGVFTGYSLLATALSIPDDGKITAVDIDREAYNVGLALIKKAGVESKISFIVSDAMTLLDDLLADGRYQGSYDFAFVDADKTNYVNYHERLIELVKVGGIIAYDNTLWGGTVALPESEVPDFMKNNWVCVTKLNEILGSDARIDIAHLPVGDGITFCRRVY</sequence>
<protein>
    <recommendedName>
        <fullName>Caffeoyl-CoA O-methyltransferase</fullName>
        <ecNumber>2.1.1.104</ecNumber>
    </recommendedName>
    <alternativeName>
        <fullName>Trans-caffeoyl-CoA 3-O-methyltransferase</fullName>
        <shortName>CCoAMT</shortName>
        <shortName>CCoAOMT</shortName>
    </alternativeName>
</protein>
<accession>Q43161</accession>
<evidence type="ECO:0000250" key="1"/>
<evidence type="ECO:0000250" key="2">
    <source>
        <dbReference type="UniProtKB" id="Q40313"/>
    </source>
</evidence>
<evidence type="ECO:0000255" key="3">
    <source>
        <dbReference type="PROSITE-ProRule" id="PRU01019"/>
    </source>
</evidence>
<dbReference type="EC" id="2.1.1.104"/>
<dbReference type="EMBL" id="L22203">
    <property type="protein sequence ID" value="AAB61680.1"/>
    <property type="molecule type" value="mRNA"/>
</dbReference>
<dbReference type="SMR" id="Q43161"/>
<dbReference type="UniPathway" id="UPA00711"/>
<dbReference type="GO" id="GO:0042409">
    <property type="term" value="F:caffeoyl-CoA O-methyltransferase activity"/>
    <property type="evidence" value="ECO:0007669"/>
    <property type="project" value="UniProtKB-EC"/>
</dbReference>
<dbReference type="GO" id="GO:0046872">
    <property type="term" value="F:metal ion binding"/>
    <property type="evidence" value="ECO:0007669"/>
    <property type="project" value="UniProtKB-KW"/>
</dbReference>
<dbReference type="GO" id="GO:0009809">
    <property type="term" value="P:lignin biosynthetic process"/>
    <property type="evidence" value="ECO:0007669"/>
    <property type="project" value="UniProtKB-KW"/>
</dbReference>
<dbReference type="GO" id="GO:0032259">
    <property type="term" value="P:methylation"/>
    <property type="evidence" value="ECO:0007669"/>
    <property type="project" value="UniProtKB-KW"/>
</dbReference>
<dbReference type="CDD" id="cd02440">
    <property type="entry name" value="AdoMet_MTases"/>
    <property type="match status" value="1"/>
</dbReference>
<dbReference type="Gene3D" id="3.40.50.150">
    <property type="entry name" value="Vaccinia Virus protein VP39"/>
    <property type="match status" value="1"/>
</dbReference>
<dbReference type="InterPro" id="IPR050362">
    <property type="entry name" value="Cation-dep_OMT"/>
</dbReference>
<dbReference type="InterPro" id="IPR029063">
    <property type="entry name" value="SAM-dependent_MTases_sf"/>
</dbReference>
<dbReference type="InterPro" id="IPR002935">
    <property type="entry name" value="SAM_O-MeTrfase"/>
</dbReference>
<dbReference type="PANTHER" id="PTHR10509:SF82">
    <property type="entry name" value="CAFFEOYL-COA O-METHYLTRANSFERASE-LIKE"/>
    <property type="match status" value="1"/>
</dbReference>
<dbReference type="PANTHER" id="PTHR10509">
    <property type="entry name" value="O-METHYLTRANSFERASE-RELATED"/>
    <property type="match status" value="1"/>
</dbReference>
<dbReference type="Pfam" id="PF01596">
    <property type="entry name" value="Methyltransf_3"/>
    <property type="match status" value="1"/>
</dbReference>
<dbReference type="SUPFAM" id="SSF53335">
    <property type="entry name" value="S-adenosyl-L-methionine-dependent methyltransferases"/>
    <property type="match status" value="1"/>
</dbReference>
<dbReference type="PROSITE" id="PS51682">
    <property type="entry name" value="SAM_OMT_I"/>
    <property type="match status" value="1"/>
</dbReference>
<organism>
    <name type="scientific">Stellaria longipes</name>
    <name type="common">Longstalk starwort</name>
    <name type="synonym">Alsine longipes</name>
    <dbReference type="NCBI Taxonomy" id="19744"/>
    <lineage>
        <taxon>Eukaryota</taxon>
        <taxon>Viridiplantae</taxon>
        <taxon>Streptophyta</taxon>
        <taxon>Embryophyta</taxon>
        <taxon>Tracheophyta</taxon>
        <taxon>Spermatophyta</taxon>
        <taxon>Magnoliopsida</taxon>
        <taxon>eudicotyledons</taxon>
        <taxon>Gunneridae</taxon>
        <taxon>Pentapetalae</taxon>
        <taxon>Caryophyllales</taxon>
        <taxon>Caryophyllaceae</taxon>
        <taxon>Alsineae</taxon>
        <taxon>Stellaria</taxon>
    </lineage>
</organism>
<keyword id="KW-0438">Lignin biosynthesis</keyword>
<keyword id="KW-0479">Metal-binding</keyword>
<keyword id="KW-0489">Methyltransferase</keyword>
<keyword id="KW-0949">S-adenosyl-L-methionine</keyword>
<keyword id="KW-0808">Transferase</keyword>